<sequence>MKYTLTRANPDADQYPLQDRQIVTDPLEEEVNKNVFMTRLEDVLHTAVNWGRKNSLWPFNFGTSCCYVEYATTLTGVHDLSRFGAEVIRASPRQADLMIVAGTCFVKMAPVIQRLYEQMLEPKWVISMGACANSGGMYDIYSVVQGVDKIIPVDVYVPGCPPRPEALIQALMLLQDQIQLERRPLSAVIGDDLQPVYKPKMMPERDRKNAQRIAVKNLRSMDEIK</sequence>
<evidence type="ECO:0000255" key="1">
    <source>
        <dbReference type="HAMAP-Rule" id="MF_01356"/>
    </source>
</evidence>
<name>NUOB_ACIBY</name>
<comment type="function">
    <text evidence="1">NDH-1 shuttles electrons from NADH, via FMN and iron-sulfur (Fe-S) centers, to quinones in the respiratory chain. The immediate electron acceptor for the enzyme in this species is believed to be ubiquinone. Couples the redox reaction to proton translocation (for every two electrons transferred, four hydrogen ions are translocated across the cytoplasmic membrane), and thus conserves the redox energy in a proton gradient.</text>
</comment>
<comment type="catalytic activity">
    <reaction evidence="1">
        <text>a quinone + NADH + 5 H(+)(in) = a quinol + NAD(+) + 4 H(+)(out)</text>
        <dbReference type="Rhea" id="RHEA:57888"/>
        <dbReference type="ChEBI" id="CHEBI:15378"/>
        <dbReference type="ChEBI" id="CHEBI:24646"/>
        <dbReference type="ChEBI" id="CHEBI:57540"/>
        <dbReference type="ChEBI" id="CHEBI:57945"/>
        <dbReference type="ChEBI" id="CHEBI:132124"/>
    </reaction>
</comment>
<comment type="cofactor">
    <cofactor evidence="1">
        <name>[4Fe-4S] cluster</name>
        <dbReference type="ChEBI" id="CHEBI:49883"/>
    </cofactor>
    <text evidence="1">Binds 1 [4Fe-4S] cluster.</text>
</comment>
<comment type="subunit">
    <text evidence="1">NDH-1 is composed of 14 different subunits. Subunits NuoB, C, D, E, F, and G constitute the peripheral sector of the complex.</text>
</comment>
<comment type="subcellular location">
    <subcellularLocation>
        <location evidence="1">Cell inner membrane</location>
        <topology evidence="1">Peripheral membrane protein</topology>
        <orientation evidence="1">Cytoplasmic side</orientation>
    </subcellularLocation>
</comment>
<comment type="similarity">
    <text evidence="1">Belongs to the complex I 20 kDa subunit family.</text>
</comment>
<gene>
    <name evidence="1" type="primary">nuoB</name>
    <name type="ordered locus">ABAYE3059</name>
</gene>
<keyword id="KW-0004">4Fe-4S</keyword>
<keyword id="KW-0997">Cell inner membrane</keyword>
<keyword id="KW-1003">Cell membrane</keyword>
<keyword id="KW-0408">Iron</keyword>
<keyword id="KW-0411">Iron-sulfur</keyword>
<keyword id="KW-0472">Membrane</keyword>
<keyword id="KW-0479">Metal-binding</keyword>
<keyword id="KW-0520">NAD</keyword>
<keyword id="KW-0874">Quinone</keyword>
<keyword id="KW-1278">Translocase</keyword>
<keyword id="KW-0813">Transport</keyword>
<keyword id="KW-0830">Ubiquinone</keyword>
<reference key="1">
    <citation type="journal article" date="2008" name="PLoS ONE">
        <title>Comparative analysis of Acinetobacters: three genomes for three lifestyles.</title>
        <authorList>
            <person name="Vallenet D."/>
            <person name="Nordmann P."/>
            <person name="Barbe V."/>
            <person name="Poirel L."/>
            <person name="Mangenot S."/>
            <person name="Bataille E."/>
            <person name="Dossat C."/>
            <person name="Gas S."/>
            <person name="Kreimeyer A."/>
            <person name="Lenoble P."/>
            <person name="Oztas S."/>
            <person name="Poulain J."/>
            <person name="Segurens B."/>
            <person name="Robert C."/>
            <person name="Abergel C."/>
            <person name="Claverie J.-M."/>
            <person name="Raoult D."/>
            <person name="Medigue C."/>
            <person name="Weissenbach J."/>
            <person name="Cruveiller S."/>
        </authorList>
    </citation>
    <scope>NUCLEOTIDE SEQUENCE [LARGE SCALE GENOMIC DNA]</scope>
    <source>
        <strain>AYE</strain>
    </source>
</reference>
<proteinExistence type="inferred from homology"/>
<protein>
    <recommendedName>
        <fullName evidence="1">NADH-quinone oxidoreductase subunit B</fullName>
        <ecNumber evidence="1">7.1.1.-</ecNumber>
    </recommendedName>
    <alternativeName>
        <fullName evidence="1">NADH dehydrogenase I subunit B</fullName>
    </alternativeName>
    <alternativeName>
        <fullName evidence="1">NDH-1 subunit B</fullName>
    </alternativeName>
</protein>
<feature type="chain" id="PRO_0000376108" description="NADH-quinone oxidoreductase subunit B">
    <location>
        <begin position="1"/>
        <end position="225"/>
    </location>
</feature>
<feature type="binding site" evidence="1">
    <location>
        <position position="65"/>
    </location>
    <ligand>
        <name>[4Fe-4S] cluster</name>
        <dbReference type="ChEBI" id="CHEBI:49883"/>
    </ligand>
</feature>
<feature type="binding site" evidence="1">
    <location>
        <position position="66"/>
    </location>
    <ligand>
        <name>[4Fe-4S] cluster</name>
        <dbReference type="ChEBI" id="CHEBI:49883"/>
    </ligand>
</feature>
<feature type="binding site" evidence="1">
    <location>
        <position position="131"/>
    </location>
    <ligand>
        <name>[4Fe-4S] cluster</name>
        <dbReference type="ChEBI" id="CHEBI:49883"/>
    </ligand>
</feature>
<feature type="binding site" evidence="1">
    <location>
        <position position="160"/>
    </location>
    <ligand>
        <name>[4Fe-4S] cluster</name>
        <dbReference type="ChEBI" id="CHEBI:49883"/>
    </ligand>
</feature>
<dbReference type="EC" id="7.1.1.-" evidence="1"/>
<dbReference type="EMBL" id="CU459141">
    <property type="protein sequence ID" value="CAM87878.1"/>
    <property type="molecule type" value="Genomic_DNA"/>
</dbReference>
<dbReference type="RefSeq" id="WP_000878003.1">
    <property type="nucleotide sequence ID" value="NZ_JBDGFB010000027.1"/>
</dbReference>
<dbReference type="SMR" id="B0V7U7"/>
<dbReference type="EnsemblBacteria" id="CAM87878">
    <property type="protein sequence ID" value="CAM87878"/>
    <property type="gene ID" value="ABAYE3059"/>
</dbReference>
<dbReference type="KEGG" id="aby:ABAYE3059"/>
<dbReference type="HOGENOM" id="CLU_055737_7_3_6"/>
<dbReference type="GO" id="GO:0005886">
    <property type="term" value="C:plasma membrane"/>
    <property type="evidence" value="ECO:0007669"/>
    <property type="project" value="UniProtKB-SubCell"/>
</dbReference>
<dbReference type="GO" id="GO:0045271">
    <property type="term" value="C:respiratory chain complex I"/>
    <property type="evidence" value="ECO:0007669"/>
    <property type="project" value="TreeGrafter"/>
</dbReference>
<dbReference type="GO" id="GO:0051539">
    <property type="term" value="F:4 iron, 4 sulfur cluster binding"/>
    <property type="evidence" value="ECO:0007669"/>
    <property type="project" value="UniProtKB-KW"/>
</dbReference>
<dbReference type="GO" id="GO:0005506">
    <property type="term" value="F:iron ion binding"/>
    <property type="evidence" value="ECO:0007669"/>
    <property type="project" value="UniProtKB-UniRule"/>
</dbReference>
<dbReference type="GO" id="GO:0008137">
    <property type="term" value="F:NADH dehydrogenase (ubiquinone) activity"/>
    <property type="evidence" value="ECO:0007669"/>
    <property type="project" value="InterPro"/>
</dbReference>
<dbReference type="GO" id="GO:0050136">
    <property type="term" value="F:NADH:ubiquinone reductase (non-electrogenic) activity"/>
    <property type="evidence" value="ECO:0007669"/>
    <property type="project" value="UniProtKB-UniRule"/>
</dbReference>
<dbReference type="GO" id="GO:0048038">
    <property type="term" value="F:quinone binding"/>
    <property type="evidence" value="ECO:0007669"/>
    <property type="project" value="UniProtKB-KW"/>
</dbReference>
<dbReference type="GO" id="GO:0009060">
    <property type="term" value="P:aerobic respiration"/>
    <property type="evidence" value="ECO:0007669"/>
    <property type="project" value="TreeGrafter"/>
</dbReference>
<dbReference type="GO" id="GO:0015990">
    <property type="term" value="P:electron transport coupled proton transport"/>
    <property type="evidence" value="ECO:0007669"/>
    <property type="project" value="TreeGrafter"/>
</dbReference>
<dbReference type="FunFam" id="3.40.50.12280:FF:000002">
    <property type="entry name" value="NADH-quinone oxidoreductase subunit B"/>
    <property type="match status" value="1"/>
</dbReference>
<dbReference type="Gene3D" id="3.40.50.12280">
    <property type="match status" value="1"/>
</dbReference>
<dbReference type="HAMAP" id="MF_01356">
    <property type="entry name" value="NDH1_NuoB"/>
    <property type="match status" value="1"/>
</dbReference>
<dbReference type="InterPro" id="IPR006137">
    <property type="entry name" value="NADH_UbQ_OxRdtase-like_20kDa"/>
</dbReference>
<dbReference type="InterPro" id="IPR006138">
    <property type="entry name" value="NADH_UQ_OxRdtase_20Kd_su"/>
</dbReference>
<dbReference type="NCBIfam" id="TIGR01957">
    <property type="entry name" value="nuoB_fam"/>
    <property type="match status" value="1"/>
</dbReference>
<dbReference type="NCBIfam" id="NF005012">
    <property type="entry name" value="PRK06411.1"/>
    <property type="match status" value="1"/>
</dbReference>
<dbReference type="PANTHER" id="PTHR11995">
    <property type="entry name" value="NADH DEHYDROGENASE"/>
    <property type="match status" value="1"/>
</dbReference>
<dbReference type="PANTHER" id="PTHR11995:SF14">
    <property type="entry name" value="NADH DEHYDROGENASE [UBIQUINONE] IRON-SULFUR PROTEIN 7, MITOCHONDRIAL"/>
    <property type="match status" value="1"/>
</dbReference>
<dbReference type="Pfam" id="PF01058">
    <property type="entry name" value="Oxidored_q6"/>
    <property type="match status" value="1"/>
</dbReference>
<dbReference type="SUPFAM" id="SSF56770">
    <property type="entry name" value="HydA/Nqo6-like"/>
    <property type="match status" value="1"/>
</dbReference>
<dbReference type="PROSITE" id="PS01150">
    <property type="entry name" value="COMPLEX1_20K"/>
    <property type="match status" value="1"/>
</dbReference>
<accession>B0V7U7</accession>
<organism>
    <name type="scientific">Acinetobacter baumannii (strain AYE)</name>
    <dbReference type="NCBI Taxonomy" id="509173"/>
    <lineage>
        <taxon>Bacteria</taxon>
        <taxon>Pseudomonadati</taxon>
        <taxon>Pseudomonadota</taxon>
        <taxon>Gammaproteobacteria</taxon>
        <taxon>Moraxellales</taxon>
        <taxon>Moraxellaceae</taxon>
        <taxon>Acinetobacter</taxon>
        <taxon>Acinetobacter calcoaceticus/baumannii complex</taxon>
    </lineage>
</organism>